<gene>
    <name evidence="4" type="primary">mmsB</name>
    <name type="ordered locus">PA3569</name>
</gene>
<reference key="1">
    <citation type="journal article" date="1992" name="J. Biol. Chem.">
        <title>Characterization of the mmsAB operon of Pseudomonas aeruginosa PAO encoding methylmalonate-semialdehyde dehydrogenase and 3-hydroxyisobutyrate dehydrogenase.</title>
        <authorList>
            <person name="Steele M.I."/>
            <person name="Lorenz D."/>
            <person name="Hatter K."/>
            <person name="Park A."/>
            <person name="Sokatch J.R."/>
        </authorList>
    </citation>
    <scope>NUCLEOTIDE SEQUENCE [GENOMIC DNA]</scope>
    <scope>CATALYTIC ACTIVITY</scope>
    <scope>PATHWAY</scope>
    <scope>INDUCTION</scope>
    <source>
        <strain>ATCC 15692 / DSM 22644 / CIP 104116 / JCM 14847 / LMG 12228 / 1C / PRS 101 / PAO1</strain>
    </source>
</reference>
<reference key="2">
    <citation type="journal article" date="2000" name="Nature">
        <title>Complete genome sequence of Pseudomonas aeruginosa PAO1, an opportunistic pathogen.</title>
        <authorList>
            <person name="Stover C.K."/>
            <person name="Pham X.-Q.T."/>
            <person name="Erwin A.L."/>
            <person name="Mizoguchi S.D."/>
            <person name="Warrener P."/>
            <person name="Hickey M.J."/>
            <person name="Brinkman F.S.L."/>
            <person name="Hufnagle W.O."/>
            <person name="Kowalik D.J."/>
            <person name="Lagrou M."/>
            <person name="Garber R.L."/>
            <person name="Goltry L."/>
            <person name="Tolentino E."/>
            <person name="Westbrock-Wadman S."/>
            <person name="Yuan Y."/>
            <person name="Brody L.L."/>
            <person name="Coulter S.N."/>
            <person name="Folger K.R."/>
            <person name="Kas A."/>
            <person name="Larbig K."/>
            <person name="Lim R.M."/>
            <person name="Smith K.A."/>
            <person name="Spencer D.H."/>
            <person name="Wong G.K.-S."/>
            <person name="Wu Z."/>
            <person name="Paulsen I.T."/>
            <person name="Reizer J."/>
            <person name="Saier M.H. Jr."/>
            <person name="Hancock R.E.W."/>
            <person name="Lory S."/>
            <person name="Olson M.V."/>
        </authorList>
    </citation>
    <scope>NUCLEOTIDE SEQUENCE [LARGE SCALE GENOMIC DNA]</scope>
    <source>
        <strain>ATCC 15692 / DSM 22644 / CIP 104116 / JCM 14847 / LMG 12228 / 1C / PRS 101 / PAO1</strain>
    </source>
</reference>
<sequence length="298" mass="30486">MTDIAFLGLGNMGGPMAANLLKAGHRVNVFDLQPKAVLGLVEQGAQGADSALQCCEGAEVVISMLPAGQHVESLYLGDDGLLARVAGKPLLIDCSTIAPETARKVAEAAAAKGLTLLDAPVSGGVGGARAGTLSFIVGGPAEGFARARPVLENMGRNIFHAGDHGAGQVAKICNNMLLGILMAGTAEALALGVKNGLDPAVLSEVMKQSSGGNWALNLYNPWPGVMPQAPASNGYAGGFQVRLMNKDLGLALANAQAVQASTPLGALARNLFSLHAQADAEHEGLDFSSIQKLYRGKD</sequence>
<name>MMSB_PSEAE</name>
<proteinExistence type="evidence at protein level"/>
<keyword id="KW-0101">Branched-chain amino acid catabolism</keyword>
<keyword id="KW-0520">NAD</keyword>
<keyword id="KW-0560">Oxidoreductase</keyword>
<keyword id="KW-1185">Reference proteome</keyword>
<comment type="catalytic activity">
    <reaction evidence="3">
        <text>3-hydroxy-2-methylpropanoate + NAD(+) = 2-methyl-3-oxopropanoate + NADH + H(+)</text>
        <dbReference type="Rhea" id="RHEA:17681"/>
        <dbReference type="ChEBI" id="CHEBI:11805"/>
        <dbReference type="ChEBI" id="CHEBI:15378"/>
        <dbReference type="ChEBI" id="CHEBI:57540"/>
        <dbReference type="ChEBI" id="CHEBI:57700"/>
        <dbReference type="ChEBI" id="CHEBI:57945"/>
        <dbReference type="EC" id="1.1.1.31"/>
    </reaction>
</comment>
<comment type="pathway">
    <text evidence="3">Amino-acid degradation; L-valine degradation.</text>
</comment>
<comment type="induction">
    <text evidence="3">By valine.</text>
</comment>
<comment type="similarity">
    <text evidence="5">Belongs to the HIBADH-related family.</text>
</comment>
<evidence type="ECO:0000250" key="1"/>
<evidence type="ECO:0000250" key="2">
    <source>
        <dbReference type="UniProtKB" id="P31937"/>
    </source>
</evidence>
<evidence type="ECO:0000269" key="3">
    <source>
    </source>
</evidence>
<evidence type="ECO:0000303" key="4">
    <source>
    </source>
</evidence>
<evidence type="ECO:0000305" key="5"/>
<accession>P28811</accession>
<organism>
    <name type="scientific">Pseudomonas aeruginosa (strain ATCC 15692 / DSM 22644 / CIP 104116 / JCM 14847 / LMG 12228 / 1C / PRS 101 / PAO1)</name>
    <dbReference type="NCBI Taxonomy" id="208964"/>
    <lineage>
        <taxon>Bacteria</taxon>
        <taxon>Pseudomonadati</taxon>
        <taxon>Pseudomonadota</taxon>
        <taxon>Gammaproteobacteria</taxon>
        <taxon>Pseudomonadales</taxon>
        <taxon>Pseudomonadaceae</taxon>
        <taxon>Pseudomonas</taxon>
    </lineage>
</organism>
<dbReference type="EC" id="1.1.1.31" evidence="3"/>
<dbReference type="EMBL" id="M84911">
    <property type="protein sequence ID" value="AAA25892.1"/>
    <property type="molecule type" value="Genomic_DNA"/>
</dbReference>
<dbReference type="EMBL" id="AE004091">
    <property type="protein sequence ID" value="AAG06957.1"/>
    <property type="molecule type" value="Genomic_DNA"/>
</dbReference>
<dbReference type="PIR" id="C42902">
    <property type="entry name" value="C42902"/>
</dbReference>
<dbReference type="RefSeq" id="NP_252259.1">
    <property type="nucleotide sequence ID" value="NC_002516.2"/>
</dbReference>
<dbReference type="RefSeq" id="WP_003113890.1">
    <property type="nucleotide sequence ID" value="NZ_QZGE01000001.1"/>
</dbReference>
<dbReference type="SMR" id="P28811"/>
<dbReference type="STRING" id="208964.PA3569"/>
<dbReference type="PaxDb" id="208964-PA3569"/>
<dbReference type="DNASU" id="879097"/>
<dbReference type="GeneID" id="879097"/>
<dbReference type="KEGG" id="pae:PA3569"/>
<dbReference type="PATRIC" id="fig|208964.12.peg.3735"/>
<dbReference type="PseudoCAP" id="PA3569"/>
<dbReference type="HOGENOM" id="CLU_035117_6_0_6"/>
<dbReference type="InParanoid" id="P28811"/>
<dbReference type="OrthoDB" id="9786703at2"/>
<dbReference type="PhylomeDB" id="P28811"/>
<dbReference type="BioCyc" id="PAER208964:G1FZ6-3637-MONOMER"/>
<dbReference type="UniPathway" id="UPA00362"/>
<dbReference type="Proteomes" id="UP000002438">
    <property type="component" value="Chromosome"/>
</dbReference>
<dbReference type="GO" id="GO:0008442">
    <property type="term" value="F:3-hydroxyisobutyrate dehydrogenase activity"/>
    <property type="evidence" value="ECO:0007669"/>
    <property type="project" value="UniProtKB-EC"/>
</dbReference>
<dbReference type="GO" id="GO:0051287">
    <property type="term" value="F:NAD binding"/>
    <property type="evidence" value="ECO:0007669"/>
    <property type="project" value="InterPro"/>
</dbReference>
<dbReference type="GO" id="GO:0050661">
    <property type="term" value="F:NADP binding"/>
    <property type="evidence" value="ECO:0007669"/>
    <property type="project" value="InterPro"/>
</dbReference>
<dbReference type="GO" id="GO:0016616">
    <property type="term" value="F:oxidoreductase activity, acting on the CH-OH group of donors, NAD or NADP as acceptor"/>
    <property type="evidence" value="ECO:0000318"/>
    <property type="project" value="GO_Central"/>
</dbReference>
<dbReference type="GO" id="GO:0006574">
    <property type="term" value="P:valine catabolic process"/>
    <property type="evidence" value="ECO:0007669"/>
    <property type="project" value="UniProtKB-UniPathway"/>
</dbReference>
<dbReference type="FunFam" id="1.10.1040.10:FF:000006">
    <property type="entry name" value="3-hydroxyisobutyrate dehydrogenase"/>
    <property type="match status" value="1"/>
</dbReference>
<dbReference type="Gene3D" id="1.10.1040.10">
    <property type="entry name" value="N-(1-d-carboxylethyl)-l-norvaline Dehydrogenase, domain 2"/>
    <property type="match status" value="1"/>
</dbReference>
<dbReference type="Gene3D" id="3.40.50.720">
    <property type="entry name" value="NAD(P)-binding Rossmann-like Domain"/>
    <property type="match status" value="1"/>
</dbReference>
<dbReference type="InterPro" id="IPR002204">
    <property type="entry name" value="3-OH-isobutyrate_DH-rel_CS"/>
</dbReference>
<dbReference type="InterPro" id="IPR008927">
    <property type="entry name" value="6-PGluconate_DH-like_C_sf"/>
</dbReference>
<dbReference type="InterPro" id="IPR013328">
    <property type="entry name" value="6PGD_dom2"/>
</dbReference>
<dbReference type="InterPro" id="IPR006115">
    <property type="entry name" value="6PGDH_NADP-bd"/>
</dbReference>
<dbReference type="InterPro" id="IPR011548">
    <property type="entry name" value="HIBADH"/>
</dbReference>
<dbReference type="InterPro" id="IPR029154">
    <property type="entry name" value="HIBADH-like_NADP-bd"/>
</dbReference>
<dbReference type="InterPro" id="IPR015815">
    <property type="entry name" value="HIBADH-related"/>
</dbReference>
<dbReference type="InterPro" id="IPR036291">
    <property type="entry name" value="NAD(P)-bd_dom_sf"/>
</dbReference>
<dbReference type="NCBIfam" id="TIGR01692">
    <property type="entry name" value="HIBADH"/>
    <property type="match status" value="1"/>
</dbReference>
<dbReference type="PANTHER" id="PTHR22981:SF7">
    <property type="entry name" value="3-HYDROXYISOBUTYRATE DEHYDROGENASE, MITOCHONDRIAL"/>
    <property type="match status" value="1"/>
</dbReference>
<dbReference type="PANTHER" id="PTHR22981">
    <property type="entry name" value="3-HYDROXYISOBUTYRATE DEHYDROGENASE-RELATED"/>
    <property type="match status" value="1"/>
</dbReference>
<dbReference type="Pfam" id="PF14833">
    <property type="entry name" value="NAD_binding_11"/>
    <property type="match status" value="1"/>
</dbReference>
<dbReference type="Pfam" id="PF03446">
    <property type="entry name" value="NAD_binding_2"/>
    <property type="match status" value="1"/>
</dbReference>
<dbReference type="PIRSF" id="PIRSF000103">
    <property type="entry name" value="HIBADH"/>
    <property type="match status" value="1"/>
</dbReference>
<dbReference type="SUPFAM" id="SSF48179">
    <property type="entry name" value="6-phosphogluconate dehydrogenase C-terminal domain-like"/>
    <property type="match status" value="1"/>
</dbReference>
<dbReference type="SUPFAM" id="SSF51735">
    <property type="entry name" value="NAD(P)-binding Rossmann-fold domains"/>
    <property type="match status" value="1"/>
</dbReference>
<dbReference type="PROSITE" id="PS00895">
    <property type="entry name" value="3_HYDROXYISOBUT_DH"/>
    <property type="match status" value="1"/>
</dbReference>
<feature type="chain" id="PRO_0000173058" description="3-hydroxyisobutyrate dehydrogenase">
    <location>
        <begin position="1"/>
        <end position="298"/>
    </location>
</feature>
<feature type="active site" evidence="1">
    <location>
        <position position="171"/>
    </location>
</feature>
<feature type="binding site" evidence="2">
    <location>
        <begin position="2"/>
        <end position="30"/>
    </location>
    <ligand>
        <name>NAD(+)</name>
        <dbReference type="ChEBI" id="CHEBI:57540"/>
    </ligand>
</feature>
<feature type="binding site" evidence="2">
    <location>
        <begin position="65"/>
        <end position="66"/>
    </location>
    <ligand>
        <name>NAD(+)</name>
        <dbReference type="ChEBI" id="CHEBI:57540"/>
    </ligand>
</feature>
<feature type="binding site" evidence="2">
    <location>
        <position position="96"/>
    </location>
    <ligand>
        <name>NAD(+)</name>
        <dbReference type="ChEBI" id="CHEBI:57540"/>
    </ligand>
</feature>
<feature type="binding site" evidence="2">
    <location>
        <position position="246"/>
    </location>
    <ligand>
        <name>NAD(+)</name>
        <dbReference type="ChEBI" id="CHEBI:57540"/>
    </ligand>
</feature>
<protein>
    <recommendedName>
        <fullName evidence="4">3-hydroxyisobutyrate dehydrogenase</fullName>
        <shortName evidence="5">HIBADH</shortName>
        <ecNumber evidence="3">1.1.1.31</ecNumber>
    </recommendedName>
</protein>